<protein>
    <recommendedName>
        <fullName>CMP-N-acetylneuraminate-beta-galactosamide-alpha-2,3-sialyltransferase 1</fullName>
        <shortName>Alpha 2,3-ST 1</shortName>
        <shortName>Beta-galactoside alpha-2,3-sialyltransferase 1</shortName>
        <ecNumber evidence="4">2.4.3.4</ecNumber>
    </recommendedName>
    <alternativeName>
        <fullName>Gal-NAc6S</fullName>
    </alternativeName>
    <alternativeName>
        <fullName>Gal-beta-1,3-GalNAc-alpha-2,3-sialyltransferase</fullName>
    </alternativeName>
    <alternativeName>
        <fullName>Monosialoganglioside sialyltransferase</fullName>
        <ecNumber evidence="4">2.4.3.2</ecNumber>
    </alternativeName>
    <alternativeName>
        <fullName>SIATFL</fullName>
    </alternativeName>
    <alternativeName>
        <fullName>ST3Gal I</fullName>
        <shortName>ST3GalI</shortName>
    </alternativeName>
    <alternativeName>
        <fullName>ST3GalA.1</fullName>
    </alternativeName>
    <alternativeName>
        <fullName>ST3O</fullName>
    </alternativeName>
    <alternativeName>
        <fullName>Sialyltransferase 4A</fullName>
        <shortName>SIAT4-A</shortName>
    </alternativeName>
</protein>
<dbReference type="EC" id="2.4.3.4" evidence="4"/>
<dbReference type="EC" id="2.4.3.2" evidence="4"/>
<dbReference type="EMBL" id="AJ744803">
    <property type="protein sequence ID" value="CAG32839.1"/>
    <property type="molecule type" value="mRNA"/>
</dbReference>
<dbReference type="RefSeq" id="NP_001009037.1">
    <property type="nucleotide sequence ID" value="NM_001009037.1"/>
</dbReference>
<dbReference type="SMR" id="Q6KB59"/>
<dbReference type="STRING" id="9598.ENSPTRP00000071819"/>
<dbReference type="CAZy" id="GT29">
    <property type="family name" value="Glycosyltransferase Family 29"/>
</dbReference>
<dbReference type="GlyCosmos" id="Q6KB59">
    <property type="glycosylation" value="4 sites, No reported glycans"/>
</dbReference>
<dbReference type="PaxDb" id="9598-ENSPTRP00000054506"/>
<dbReference type="GeneID" id="450114"/>
<dbReference type="CTD" id="6482"/>
<dbReference type="eggNOG" id="KOG2692">
    <property type="taxonomic scope" value="Eukaryota"/>
</dbReference>
<dbReference type="InParanoid" id="Q6KB59"/>
<dbReference type="UniPathway" id="UPA00378"/>
<dbReference type="Proteomes" id="UP000002277">
    <property type="component" value="Unplaced"/>
</dbReference>
<dbReference type="GO" id="GO:0005576">
    <property type="term" value="C:extracellular region"/>
    <property type="evidence" value="ECO:0007669"/>
    <property type="project" value="UniProtKB-SubCell"/>
</dbReference>
<dbReference type="GO" id="GO:1990675">
    <property type="term" value="C:Golgi medial cisterna membrane"/>
    <property type="evidence" value="ECO:0000250"/>
    <property type="project" value="UniProtKB"/>
</dbReference>
<dbReference type="GO" id="GO:1990676">
    <property type="term" value="C:Golgi trans cisterna membrane"/>
    <property type="evidence" value="ECO:0000250"/>
    <property type="project" value="UniProtKB"/>
</dbReference>
<dbReference type="GO" id="GO:0016020">
    <property type="term" value="C:membrane"/>
    <property type="evidence" value="ECO:0000318"/>
    <property type="project" value="GO_Central"/>
</dbReference>
<dbReference type="GO" id="GO:0032588">
    <property type="term" value="C:trans-Golgi network membrane"/>
    <property type="evidence" value="ECO:0000250"/>
    <property type="project" value="UniProtKB"/>
</dbReference>
<dbReference type="GO" id="GO:0047288">
    <property type="term" value="F:beta-D-galactosyl-(1-&gt;3)-N-acetyl-beta-D-galactosaminide alpha-2,3- sialyltransferase"/>
    <property type="evidence" value="ECO:0007669"/>
    <property type="project" value="RHEA"/>
</dbReference>
<dbReference type="GO" id="GO:0003836">
    <property type="term" value="F:beta-galactoside (CMP) alpha-2,3-sialyltransferase activity"/>
    <property type="evidence" value="ECO:0000250"/>
    <property type="project" value="UniProtKB"/>
</dbReference>
<dbReference type="GO" id="GO:0010706">
    <property type="term" value="P:ganglioside biosynthetic process via lactosylceramide"/>
    <property type="evidence" value="ECO:0000250"/>
    <property type="project" value="UniProtKB"/>
</dbReference>
<dbReference type="GO" id="GO:0006054">
    <property type="term" value="P:N-acetylneuraminate metabolic process"/>
    <property type="evidence" value="ECO:0000250"/>
    <property type="project" value="UniProtKB"/>
</dbReference>
<dbReference type="GO" id="GO:0006486">
    <property type="term" value="P:protein glycosylation"/>
    <property type="evidence" value="ECO:0000318"/>
    <property type="project" value="GO_Central"/>
</dbReference>
<dbReference type="GO" id="GO:0006487">
    <property type="term" value="P:protein N-linked glycosylation"/>
    <property type="evidence" value="ECO:0000250"/>
    <property type="project" value="UniProtKB"/>
</dbReference>
<dbReference type="GO" id="GO:1990743">
    <property type="term" value="P:protein sialylation"/>
    <property type="evidence" value="ECO:0000250"/>
    <property type="project" value="UniProtKB"/>
</dbReference>
<dbReference type="GO" id="GO:0097503">
    <property type="term" value="P:sialylation"/>
    <property type="evidence" value="ECO:0000250"/>
    <property type="project" value="UniProtKB"/>
</dbReference>
<dbReference type="CDD" id="cd23980">
    <property type="entry name" value="GT29_ST3GAL1"/>
    <property type="match status" value="1"/>
</dbReference>
<dbReference type="FunFam" id="3.90.1480.20:FF:000034">
    <property type="entry name" value="CMP-N-acetylneuraminate-beta-galactosamide-alpha-2,3-sialyltransferase 1"/>
    <property type="match status" value="1"/>
</dbReference>
<dbReference type="Gene3D" id="3.90.1480.20">
    <property type="entry name" value="Glycosyl transferase family 29"/>
    <property type="match status" value="1"/>
</dbReference>
<dbReference type="InterPro" id="IPR051757">
    <property type="entry name" value="Beta-gal_alpha2-3_sialyltrans"/>
</dbReference>
<dbReference type="InterPro" id="IPR001675">
    <property type="entry name" value="Glyco_trans_29"/>
</dbReference>
<dbReference type="InterPro" id="IPR038578">
    <property type="entry name" value="GT29-like_sf"/>
</dbReference>
<dbReference type="InterPro" id="IPR012163">
    <property type="entry name" value="Sialyl_trans"/>
</dbReference>
<dbReference type="PANTHER" id="PTHR46032">
    <property type="entry name" value="ALPHA-2,3-SIALYLTRANSFERASE ST3GAL I ISOFORM X1"/>
    <property type="match status" value="1"/>
</dbReference>
<dbReference type="PANTHER" id="PTHR46032:SF6">
    <property type="entry name" value="CMP-N-ACETYLNEURAMINATE-BETA-GALACTOSAMIDE-ALPHA-2,3-SIALYLTRANSFERASE 1"/>
    <property type="match status" value="1"/>
</dbReference>
<dbReference type="Pfam" id="PF00777">
    <property type="entry name" value="Glyco_transf_29"/>
    <property type="match status" value="1"/>
</dbReference>
<dbReference type="PIRSF" id="PIRSF005557">
    <property type="entry name" value="Sialyl_trans"/>
    <property type="match status" value="1"/>
</dbReference>
<evidence type="ECO:0000250" key="1"/>
<evidence type="ECO:0000250" key="2">
    <source>
        <dbReference type="UniProtKB" id="P54751"/>
    </source>
</evidence>
<evidence type="ECO:0000250" key="3">
    <source>
        <dbReference type="UniProtKB" id="Q02745"/>
    </source>
</evidence>
<evidence type="ECO:0000250" key="4">
    <source>
        <dbReference type="UniProtKB" id="Q11201"/>
    </source>
</evidence>
<evidence type="ECO:0000255" key="5"/>
<evidence type="ECO:0000305" key="6"/>
<organism>
    <name type="scientific">Pan troglodytes</name>
    <name type="common">Chimpanzee</name>
    <dbReference type="NCBI Taxonomy" id="9598"/>
    <lineage>
        <taxon>Eukaryota</taxon>
        <taxon>Metazoa</taxon>
        <taxon>Chordata</taxon>
        <taxon>Craniata</taxon>
        <taxon>Vertebrata</taxon>
        <taxon>Euteleostomi</taxon>
        <taxon>Mammalia</taxon>
        <taxon>Eutheria</taxon>
        <taxon>Euarchontoglires</taxon>
        <taxon>Primates</taxon>
        <taxon>Haplorrhini</taxon>
        <taxon>Catarrhini</taxon>
        <taxon>Hominidae</taxon>
        <taxon>Pan</taxon>
    </lineage>
</organism>
<proteinExistence type="evidence at transcript level"/>
<feature type="chain" id="PRO_0000149255" description="CMP-N-acetylneuraminate-beta-galactosamide-alpha-2,3-sialyltransferase 1">
    <location>
        <begin position="1"/>
        <end position="340"/>
    </location>
</feature>
<feature type="topological domain" description="Cytoplasmic" evidence="5">
    <location>
        <begin position="1"/>
        <end position="13"/>
    </location>
</feature>
<feature type="transmembrane region" description="Helical; Signal-anchor for type II membrane protein" evidence="5">
    <location>
        <begin position="14"/>
        <end position="34"/>
    </location>
</feature>
<feature type="topological domain" description="Lumenal" evidence="5">
    <location>
        <begin position="35"/>
        <end position="340"/>
    </location>
</feature>
<feature type="binding site" evidence="3">
    <location>
        <position position="105"/>
    </location>
    <ligand>
        <name>substrate</name>
    </ligand>
</feature>
<feature type="binding site" evidence="3">
    <location>
        <position position="147"/>
    </location>
    <ligand>
        <name>substrate</name>
    </ligand>
</feature>
<feature type="binding site" evidence="3">
    <location>
        <position position="170"/>
    </location>
    <ligand>
        <name>substrate</name>
    </ligand>
</feature>
<feature type="binding site" evidence="3">
    <location>
        <position position="230"/>
    </location>
    <ligand>
        <name>substrate</name>
    </ligand>
</feature>
<feature type="binding site" evidence="3">
    <location>
        <position position="266"/>
    </location>
    <ligand>
        <name>substrate</name>
    </ligand>
</feature>
<feature type="binding site" evidence="3">
    <location>
        <position position="270"/>
    </location>
    <ligand>
        <name>substrate</name>
    </ligand>
</feature>
<feature type="binding site" evidence="3">
    <location>
        <position position="290"/>
    </location>
    <ligand>
        <name>substrate</name>
    </ligand>
</feature>
<feature type="binding site" evidence="3">
    <location>
        <position position="299"/>
    </location>
    <ligand>
        <name>substrate</name>
    </ligand>
</feature>
<feature type="binding site" evidence="3">
    <location>
        <position position="316"/>
    </location>
    <ligand>
        <name>substrate</name>
    </ligand>
</feature>
<feature type="glycosylation site" description="N-linked (GlcNAc...) asparagine" evidence="5">
    <location>
        <position position="79"/>
    </location>
</feature>
<feature type="glycosylation site" description="N-linked (GlcNAc...) asparagine" evidence="5">
    <location>
        <position position="114"/>
    </location>
</feature>
<feature type="glycosylation site" description="N-linked (GlcNAc...) asparagine" evidence="5">
    <location>
        <position position="201"/>
    </location>
</feature>
<feature type="glycosylation site" description="N-linked (GlcNAc...) asparagine" evidence="5">
    <location>
        <position position="323"/>
    </location>
</feature>
<feature type="disulfide bond" evidence="3">
    <location>
        <begin position="59"/>
        <end position="64"/>
    </location>
</feature>
<feature type="disulfide bond" evidence="3">
    <location>
        <begin position="61"/>
        <end position="139"/>
    </location>
</feature>
<feature type="disulfide bond" evidence="3">
    <location>
        <begin position="142"/>
        <end position="281"/>
    </location>
</feature>
<comment type="function">
    <text evidence="2 4">A beta-galactoside alpha2-&gt;3 sialyltransferase involved in terminal sialylation of glycoproteins and glycolipids. Catalyzes the transfer of sialic acid (N-acetyl-neuraminic acid; Neu5Ac) from the nucleotide sugar donor CMP-Neu5Ac onto acceptor Galbeta-(1-&gt;3)-GalNAc-terminated glycoconjugates through an alpha2-3 linkage. Adds sialic acid to the core 1 O-glycan, Galbeta-(1-&gt;3)-GalNAc-O-Ser/Thr, which is a major structure of mucin-type O-glycans. As part of a homeostatic mechanism that regulates CD8-positive T cell numbers, sialylates core 1 O-glycans of T cell glycoproteins, SPN/CD43 and PTPRC/CD45. Prevents premature apoptosis of thymic CD8-positive T cells prior to peripheral emigration, whereas in the secondary lymphoid organs controls the survival of CD8-positive memory T cells generated following a successful immune response. Transfers sialic acid to asialofetuin, presumably onto Galbeta-(1-&gt;3)-GalNAc-O-Ser. Sialylates GM1a, GA1 and GD1b gangliosides to form GD1a, GM1b and GT1b, respectively.</text>
</comment>
<comment type="catalytic activity">
    <reaction evidence="4">
        <text>a beta-D-galactosyl-(1-&gt;3)-N-acetyl-alpha-D-galactosaminyl derivative + CMP-N-acetyl-beta-neuraminate = an N-acetyl-alpha-neuraminyl-(2-&gt;3)-beta-D-galactosyl-(1-&gt;3)-N-acetyl-alpha-D-galactosaminyl derivative + CMP + H(+)</text>
        <dbReference type="Rhea" id="RHEA:21616"/>
        <dbReference type="ChEBI" id="CHEBI:15378"/>
        <dbReference type="ChEBI" id="CHEBI:57812"/>
        <dbReference type="ChEBI" id="CHEBI:60377"/>
        <dbReference type="ChEBI" id="CHEBI:133470"/>
        <dbReference type="ChEBI" id="CHEBI:139596"/>
        <dbReference type="EC" id="2.4.3.4"/>
    </reaction>
    <physiologicalReaction direction="left-to-right" evidence="4">
        <dbReference type="Rhea" id="RHEA:21617"/>
    </physiologicalReaction>
</comment>
<comment type="catalytic activity">
    <reaction evidence="4">
        <text>a ganglioside GM1 + CMP-N-acetyl-beta-neuraminate = a ganglioside GD1a + CMP + H(+)</text>
        <dbReference type="Rhea" id="RHEA:48260"/>
        <dbReference type="ChEBI" id="CHEBI:15378"/>
        <dbReference type="ChEBI" id="CHEBI:57812"/>
        <dbReference type="ChEBI" id="CHEBI:60377"/>
        <dbReference type="ChEBI" id="CHEBI:82637"/>
        <dbReference type="ChEBI" id="CHEBI:82639"/>
    </reaction>
    <physiologicalReaction direction="left-to-right" evidence="4">
        <dbReference type="Rhea" id="RHEA:48261"/>
    </physiologicalReaction>
</comment>
<comment type="catalytic activity">
    <reaction evidence="4">
        <text>a ganglioside GM1 (d18:1(4E)) + CMP-N-acetyl-beta-neuraminate = a ganglioside GD1a (d18:1(4E)) + CMP + H(+)</text>
        <dbReference type="Rhea" id="RHEA:18021"/>
        <dbReference type="ChEBI" id="CHEBI:15378"/>
        <dbReference type="ChEBI" id="CHEBI:57812"/>
        <dbReference type="ChEBI" id="CHEBI:60377"/>
        <dbReference type="ChEBI" id="CHEBI:77709"/>
        <dbReference type="ChEBI" id="CHEBI:78445"/>
        <dbReference type="EC" id="2.4.3.2"/>
    </reaction>
    <physiologicalReaction direction="left-to-right" evidence="4">
        <dbReference type="Rhea" id="RHEA:18022"/>
    </physiologicalReaction>
</comment>
<comment type="catalytic activity">
    <reaction evidence="2">
        <text>ganglioside GM1 (d18:1(4E)/18:0) + CMP-N-acetyl-beta-neuraminate = ganglioside GD1a (18:1(4E)/18:0) + CMP + H(+)</text>
        <dbReference type="Rhea" id="RHEA:48248"/>
        <dbReference type="ChEBI" id="CHEBI:15378"/>
        <dbReference type="ChEBI" id="CHEBI:57812"/>
        <dbReference type="ChEBI" id="CHEBI:60377"/>
        <dbReference type="ChEBI" id="CHEBI:73110"/>
        <dbReference type="ChEBI" id="CHEBI:90153"/>
    </reaction>
    <physiologicalReaction direction="left-to-right" evidence="2">
        <dbReference type="Rhea" id="RHEA:48249"/>
    </physiologicalReaction>
</comment>
<comment type="catalytic activity">
    <reaction evidence="4">
        <text>a ganglioside GA1 + CMP-N-acetyl-beta-neuraminate = a ganglioside GM1b + CMP + H(+)</text>
        <dbReference type="Rhea" id="RHEA:48244"/>
        <dbReference type="ChEBI" id="CHEBI:15378"/>
        <dbReference type="ChEBI" id="CHEBI:57812"/>
        <dbReference type="ChEBI" id="CHEBI:60377"/>
        <dbReference type="ChEBI" id="CHEBI:88069"/>
        <dbReference type="ChEBI" id="CHEBI:90151"/>
    </reaction>
    <physiologicalReaction direction="left-to-right" evidence="4">
        <dbReference type="Rhea" id="RHEA:48245"/>
    </physiologicalReaction>
</comment>
<comment type="catalytic activity">
    <reaction evidence="3">
        <text>a ganglioside GA1 (d18:1(4E)) + CMP-N-acetyl-beta-neuraminate = a ganglioside GM1b (d18:1(4E)) + CMP + H(+)</text>
        <dbReference type="Rhea" id="RHEA:47560"/>
        <dbReference type="ChEBI" id="CHEBI:15378"/>
        <dbReference type="ChEBI" id="CHEBI:27938"/>
        <dbReference type="ChEBI" id="CHEBI:57812"/>
        <dbReference type="ChEBI" id="CHEBI:60377"/>
        <dbReference type="ChEBI" id="CHEBI:78568"/>
    </reaction>
    <physiologicalReaction direction="left-to-right" evidence="3">
        <dbReference type="Rhea" id="RHEA:47561"/>
    </physiologicalReaction>
</comment>
<comment type="catalytic activity">
    <reaction evidence="2">
        <text>a ganglioside GD1b + CMP-N-acetyl-beta-neuraminate = a ganglioside GT1b + CMP + H(+)</text>
        <dbReference type="Rhea" id="RHEA:48240"/>
        <dbReference type="ChEBI" id="CHEBI:15378"/>
        <dbReference type="ChEBI" id="CHEBI:57812"/>
        <dbReference type="ChEBI" id="CHEBI:60377"/>
        <dbReference type="ChEBI" id="CHEBI:82939"/>
        <dbReference type="ChEBI" id="CHEBI:82940"/>
    </reaction>
    <physiologicalReaction direction="left-to-right" evidence="2">
        <dbReference type="Rhea" id="RHEA:48241"/>
    </physiologicalReaction>
</comment>
<comment type="catalytic activity">
    <reaction evidence="4">
        <text>a 3-O-[beta-D-galactosyl-(1-&gt;3)-N-acetyl-alpha-D-galactosaminyl]-L-threonyl-[protein] + CMP-N-acetyl-beta-neuraminate = a 3-O-[N-acetyl-alpha-neuraminyl-(2-&gt;3)-beta-D-galactosyl-(1-&gt;3)-N-acetyl-alpha-D-galactosaminyl]-L-threonyl-[protein] + CMP + H(+)</text>
        <dbReference type="Rhea" id="RHEA:56208"/>
        <dbReference type="Rhea" id="RHEA-COMP:13923"/>
        <dbReference type="Rhea" id="RHEA-COMP:14417"/>
        <dbReference type="ChEBI" id="CHEBI:15378"/>
        <dbReference type="ChEBI" id="CHEBI:57812"/>
        <dbReference type="ChEBI" id="CHEBI:60377"/>
        <dbReference type="ChEBI" id="CHEBI:137950"/>
        <dbReference type="ChEBI" id="CHEBI:139598"/>
    </reaction>
    <physiologicalReaction direction="left-to-right" evidence="4">
        <dbReference type="Rhea" id="RHEA:56209"/>
    </physiologicalReaction>
</comment>
<comment type="catalytic activity">
    <reaction evidence="4">
        <text>a 3-O-[beta-D-galactosyl-(1-&gt;3)-N-acetyl-alpha-D-galactosaminyl]-L-seryl-[protein] + CMP-N-acetyl-beta-neuraminate = 3-O-[N-acetyl-alpha-neuraminyl-(2-&gt;3)-beta-D-galactosyl-(1-&gt;3)-N-acetyl-alpha-D-galactosaminyl]-L-seryl-[protein] + CMP + H(+)</text>
        <dbReference type="Rhea" id="RHEA:56204"/>
        <dbReference type="Rhea" id="RHEA-COMP:13922"/>
        <dbReference type="Rhea" id="RHEA-COMP:14416"/>
        <dbReference type="ChEBI" id="CHEBI:15378"/>
        <dbReference type="ChEBI" id="CHEBI:57812"/>
        <dbReference type="ChEBI" id="CHEBI:60377"/>
        <dbReference type="ChEBI" id="CHEBI:137949"/>
        <dbReference type="ChEBI" id="CHEBI:139597"/>
    </reaction>
    <physiologicalReaction direction="left-to-right" evidence="4">
        <dbReference type="Rhea" id="RHEA:56205"/>
    </physiologicalReaction>
</comment>
<comment type="pathway">
    <text evidence="2 4">Protein modification; protein glycosylation.</text>
</comment>
<comment type="pathway">
    <text evidence="2 4">Glycolipid biosynthesis.</text>
</comment>
<comment type="subcellular location">
    <subcellularLocation>
        <location evidence="4">Golgi apparatus</location>
        <location evidence="4">Golgi stack membrane</location>
        <topology evidence="5">Single-pass type II membrane protein</topology>
    </subcellularLocation>
    <subcellularLocation>
        <location evidence="4">Golgi apparatus</location>
        <location evidence="4">trans-Golgi network membrane</location>
        <topology evidence="5">Single-pass type II membrane protein</topology>
    </subcellularLocation>
    <subcellularLocation>
        <location>Secreted</location>
    </subcellularLocation>
    <text evidence="4">Membrane-bound form in medial and trans cisternae of Golgi (By similarity). Secreted into the body fluid.</text>
</comment>
<comment type="PTM">
    <text evidence="1">The soluble form derives from the membrane form by proteolytic processing.</text>
</comment>
<comment type="similarity">
    <text evidence="6">Belongs to the glycosyltransferase 29 family.</text>
</comment>
<name>SIA4A_PANTR</name>
<keyword id="KW-1015">Disulfide bond</keyword>
<keyword id="KW-0325">Glycoprotein</keyword>
<keyword id="KW-0328">Glycosyltransferase</keyword>
<keyword id="KW-0333">Golgi apparatus</keyword>
<keyword id="KW-0443">Lipid metabolism</keyword>
<keyword id="KW-0472">Membrane</keyword>
<keyword id="KW-1185">Reference proteome</keyword>
<keyword id="KW-0964">Secreted</keyword>
<keyword id="KW-0735">Signal-anchor</keyword>
<keyword id="KW-0808">Transferase</keyword>
<keyword id="KW-0812">Transmembrane</keyword>
<keyword id="KW-1133">Transmembrane helix</keyword>
<gene>
    <name type="primary">ST3GAL1</name>
    <name type="synonym">SIAT4</name>
    <name type="synonym">SIAT4A</name>
</gene>
<sequence>MVTLRKRTLKVLTFLVLFIFLTSFFLNYSHTMVATTWFPKQMVLELSENLKRLIKHRPCTCTHCIGQRKLSAWFDERFNQTVQPLLTAQNALLEDDTYRWWLRLQREKKPNNLNDTIKELFRVVPGNVDPMLEKRSVGCRRCAVVGNSGNLRESSYGPEIDSHDFVLRMNKAPTAGFEADVGTKTTHHLVYPESFRELGDNVSMILVPFKTIDLEWVVSAITTGTISHTYTPVLVKIRVKQDKILIYHPAFIKYVFDNWLQGHGRYPSTGILSVIFSMHVCDEVDLYGFGADSKGNWHHYWENNPSAGAFRKTGVHDADFESNVTATLAAINKIRIFKGR</sequence>
<accession>Q6KB59</accession>
<reference key="1">
    <citation type="submission" date="2004-06" db="EMBL/GenBank/DDBJ databases">
        <title>Phylogeny of sialyltransferases.</title>
        <authorList>
            <person name="Harduin-Lepers A."/>
            <person name="Martinez-Duncker I."/>
            <person name="Mollicone R."/>
            <person name="Delannoy P."/>
            <person name="Oriol R."/>
        </authorList>
    </citation>
    <scope>NUCLEOTIDE SEQUENCE [MRNA]</scope>
</reference>